<dbReference type="EMBL" id="BX284603">
    <property type="protein sequence ID" value="CCD71830.1"/>
    <property type="molecule type" value="Genomic_DNA"/>
</dbReference>
<dbReference type="RefSeq" id="NP_498940.1">
    <property type="nucleotide sequence ID" value="NM_066539.9"/>
</dbReference>
<dbReference type="BioGRID" id="41436">
    <property type="interactions" value="11"/>
</dbReference>
<dbReference type="DIP" id="DIP-61373N"/>
<dbReference type="FunCoup" id="P83351">
    <property type="interactions" value="2231"/>
</dbReference>
<dbReference type="IntAct" id="P83351">
    <property type="interactions" value="1"/>
</dbReference>
<dbReference type="STRING" id="6239.K02D10.5.1"/>
<dbReference type="TCDB" id="1.F.1.1.3">
    <property type="family name" value="the synaptosomal vesicle fusion pore (svf-pore) family"/>
</dbReference>
<dbReference type="PaxDb" id="6239-K02D10.5"/>
<dbReference type="PeptideAtlas" id="P83351"/>
<dbReference type="EnsemblMetazoa" id="K02D10.5.1">
    <property type="protein sequence ID" value="K02D10.5.1"/>
    <property type="gene ID" value="WBGene00019305"/>
</dbReference>
<dbReference type="GeneID" id="176233"/>
<dbReference type="KEGG" id="cel:CELE_K02D10.5"/>
<dbReference type="UCSC" id="K02D10.5">
    <property type="organism name" value="c. elegans"/>
</dbReference>
<dbReference type="AGR" id="WB:WBGene00019305"/>
<dbReference type="CTD" id="176233"/>
<dbReference type="WormBase" id="K02D10.5">
    <property type="protein sequence ID" value="CE17152"/>
    <property type="gene ID" value="WBGene00019305"/>
    <property type="gene designation" value="snap-29"/>
</dbReference>
<dbReference type="eggNOG" id="KOG3065">
    <property type="taxonomic scope" value="Eukaryota"/>
</dbReference>
<dbReference type="GeneTree" id="ENSGT00950000182843"/>
<dbReference type="HOGENOM" id="CLU_069907_0_0_1"/>
<dbReference type="InParanoid" id="P83351"/>
<dbReference type="OMA" id="TKMSLMM"/>
<dbReference type="OrthoDB" id="18679at2759"/>
<dbReference type="PhylomeDB" id="P83351"/>
<dbReference type="Reactome" id="R-CEL-6798695">
    <property type="pathway name" value="Neutrophil degranulation"/>
</dbReference>
<dbReference type="Reactome" id="R-CEL-6811438">
    <property type="pathway name" value="Intra-Golgi traffic"/>
</dbReference>
<dbReference type="PRO" id="PR:P83351"/>
<dbReference type="Proteomes" id="UP000001940">
    <property type="component" value="Chromosome III"/>
</dbReference>
<dbReference type="Bgee" id="WBGene00019305">
    <property type="expression patterns" value="Expressed in pharyngeal muscle cell (C elegans) and 4 other cell types or tissues"/>
</dbReference>
<dbReference type="GO" id="GO:0016324">
    <property type="term" value="C:apical plasma membrane"/>
    <property type="evidence" value="ECO:0000314"/>
    <property type="project" value="WormBase"/>
</dbReference>
<dbReference type="GO" id="GO:0043005">
    <property type="term" value="C:neuron projection"/>
    <property type="evidence" value="ECO:0007669"/>
    <property type="project" value="UniProtKB-KW"/>
</dbReference>
<dbReference type="GO" id="GO:0005886">
    <property type="term" value="C:plasma membrane"/>
    <property type="evidence" value="ECO:0000318"/>
    <property type="project" value="GO_Central"/>
</dbReference>
<dbReference type="GO" id="GO:0098793">
    <property type="term" value="C:presynapse"/>
    <property type="evidence" value="ECO:0007669"/>
    <property type="project" value="GOC"/>
</dbReference>
<dbReference type="GO" id="GO:0055037">
    <property type="term" value="C:recycling endosome"/>
    <property type="evidence" value="ECO:0000314"/>
    <property type="project" value="WormBase"/>
</dbReference>
<dbReference type="GO" id="GO:0031201">
    <property type="term" value="C:SNARE complex"/>
    <property type="evidence" value="ECO:0000318"/>
    <property type="project" value="GO_Central"/>
</dbReference>
<dbReference type="GO" id="GO:0005484">
    <property type="term" value="F:SNAP receptor activity"/>
    <property type="evidence" value="ECO:0000318"/>
    <property type="project" value="GO_Central"/>
</dbReference>
<dbReference type="GO" id="GO:0019905">
    <property type="term" value="F:syntaxin binding"/>
    <property type="evidence" value="ECO:0000318"/>
    <property type="project" value="GO_Central"/>
</dbReference>
<dbReference type="GO" id="GO:0006887">
    <property type="term" value="P:exocytosis"/>
    <property type="evidence" value="ECO:0000318"/>
    <property type="project" value="GO_Central"/>
</dbReference>
<dbReference type="GO" id="GO:0065002">
    <property type="term" value="P:intracellular protein transmembrane transport"/>
    <property type="evidence" value="ECO:0000315"/>
    <property type="project" value="WormBase"/>
</dbReference>
<dbReference type="GO" id="GO:0030728">
    <property type="term" value="P:ovulation"/>
    <property type="evidence" value="ECO:0000315"/>
    <property type="project" value="WormBase"/>
</dbReference>
<dbReference type="GO" id="GO:0046903">
    <property type="term" value="P:secretion"/>
    <property type="evidence" value="ECO:0000315"/>
    <property type="project" value="WormBase"/>
</dbReference>
<dbReference type="GO" id="GO:0031629">
    <property type="term" value="P:synaptic vesicle fusion to presynaptic active zone membrane"/>
    <property type="evidence" value="ECO:0000318"/>
    <property type="project" value="GO_Central"/>
</dbReference>
<dbReference type="GO" id="GO:0016082">
    <property type="term" value="P:synaptic vesicle priming"/>
    <property type="evidence" value="ECO:0000318"/>
    <property type="project" value="GO_Central"/>
</dbReference>
<dbReference type="CDD" id="cd15856">
    <property type="entry name" value="SNARE_SNAP29C"/>
    <property type="match status" value="1"/>
</dbReference>
<dbReference type="CDD" id="cd15887">
    <property type="entry name" value="SNARE_SNAP29N"/>
    <property type="match status" value="1"/>
</dbReference>
<dbReference type="FunFam" id="1.20.5.110:FF:000041">
    <property type="entry name" value="Synaptosomal-associated protein 29"/>
    <property type="match status" value="1"/>
</dbReference>
<dbReference type="FunFam" id="1.20.5.110:FF:000079">
    <property type="entry name" value="synaptosomal-associated protein 29"/>
    <property type="match status" value="1"/>
</dbReference>
<dbReference type="Gene3D" id="1.20.5.110">
    <property type="match status" value="2"/>
</dbReference>
<dbReference type="InterPro" id="IPR000727">
    <property type="entry name" value="T_SNARE_dom"/>
</dbReference>
<dbReference type="PANTHER" id="PTHR19305">
    <property type="entry name" value="SYNAPTOSOMAL ASSOCIATED PROTEIN"/>
    <property type="match status" value="1"/>
</dbReference>
<dbReference type="PANTHER" id="PTHR19305:SF9">
    <property type="entry name" value="SYNAPTOSOMAL-ASSOCIATED PROTEIN 29"/>
    <property type="match status" value="1"/>
</dbReference>
<dbReference type="SMART" id="SM00397">
    <property type="entry name" value="t_SNARE"/>
    <property type="match status" value="2"/>
</dbReference>
<dbReference type="SUPFAM" id="SSF58038">
    <property type="entry name" value="SNARE fusion complex"/>
    <property type="match status" value="2"/>
</dbReference>
<dbReference type="PROSITE" id="PS50192">
    <property type="entry name" value="T_SNARE"/>
    <property type="match status" value="2"/>
</dbReference>
<reference key="1">
    <citation type="journal article" date="1994" name="Nature">
        <title>2.2 Mb of contiguous nucleotide sequence from chromosome III of C. elegans.</title>
        <authorList>
            <person name="Wilson R."/>
            <person name="Ainscough R."/>
            <person name="Anderson K."/>
            <person name="Baynes C."/>
            <person name="Berks M."/>
            <person name="Bonfield J."/>
            <person name="Burton J."/>
            <person name="Connell M."/>
            <person name="Copsey T."/>
            <person name="Cooper J."/>
            <person name="Coulson A."/>
            <person name="Craxton M."/>
            <person name="Dear S."/>
            <person name="Du Z."/>
            <person name="Durbin R."/>
            <person name="Favello A."/>
            <person name="Fraser A."/>
            <person name="Fulton L."/>
            <person name="Gardner A."/>
            <person name="Green P."/>
            <person name="Hawkins T."/>
            <person name="Hillier L."/>
            <person name="Jier M."/>
            <person name="Johnston L."/>
            <person name="Jones M."/>
            <person name="Kershaw J."/>
            <person name="Kirsten J."/>
            <person name="Laisster N."/>
            <person name="Latreille P."/>
            <person name="Lightning J."/>
            <person name="Lloyd C."/>
            <person name="Mortimore B."/>
            <person name="O'Callaghan M."/>
            <person name="Parsons J."/>
            <person name="Percy C."/>
            <person name="Rifken L."/>
            <person name="Roopra A."/>
            <person name="Saunders D."/>
            <person name="Shownkeen R."/>
            <person name="Sims M."/>
            <person name="Smaldon N."/>
            <person name="Smith A."/>
            <person name="Smith M."/>
            <person name="Sonnhammer E."/>
            <person name="Staden R."/>
            <person name="Sulston J."/>
            <person name="Thierry-Mieg J."/>
            <person name="Thomas K."/>
            <person name="Vaudin M."/>
            <person name="Vaughan K."/>
            <person name="Waterston R."/>
            <person name="Watson A."/>
            <person name="Weinstock L."/>
            <person name="Wilkinson-Sproat J."/>
            <person name="Wohldman P."/>
        </authorList>
    </citation>
    <scope>NUCLEOTIDE SEQUENCE [LARGE SCALE GENOMIC DNA]</scope>
    <source>
        <strain>Bristol N2</strain>
    </source>
</reference>
<reference key="2">
    <citation type="journal article" date="1998" name="Science">
        <title>Genome sequence of the nematode C. elegans: a platform for investigating biology.</title>
        <authorList>
            <consortium name="The C. elegans sequencing consortium"/>
        </authorList>
    </citation>
    <scope>NUCLEOTIDE SEQUENCE [LARGE SCALE GENOMIC DNA]</scope>
    <source>
        <strain>Bristol N2</strain>
    </source>
</reference>
<reference key="3">
    <citation type="journal article" date="2017" name="Nat. Cell Biol.">
        <title>Inter-organ signalling by HRG-7 promotes systemic haem homeostasis.</title>
        <authorList>
            <person name="Sinclair J."/>
            <person name="Pinter K."/>
            <person name="Samuel T."/>
            <person name="Beardsley S."/>
            <person name="Yuan X."/>
            <person name="Zhang J."/>
            <person name="Meng K."/>
            <person name="Yun S."/>
            <person name="Krause M."/>
            <person name="Hamza I."/>
        </authorList>
    </citation>
    <scope>FUNCTION</scope>
    <scope>DISRUPTION PHENOTYPE</scope>
</reference>
<protein>
    <recommendedName>
        <fullName>Soluble NSF attachment protein 29</fullName>
    </recommendedName>
</protein>
<organism>
    <name type="scientific">Caenorhabditis elegans</name>
    <dbReference type="NCBI Taxonomy" id="6239"/>
    <lineage>
        <taxon>Eukaryota</taxon>
        <taxon>Metazoa</taxon>
        <taxon>Ecdysozoa</taxon>
        <taxon>Nematoda</taxon>
        <taxon>Chromadorea</taxon>
        <taxon>Rhabditida</taxon>
        <taxon>Rhabditina</taxon>
        <taxon>Rhabditomorpha</taxon>
        <taxon>Rhabditoidea</taxon>
        <taxon>Rhabditidae</taxon>
        <taxon>Peloderinae</taxon>
        <taxon>Caenorhabditis</taxon>
    </lineage>
</organism>
<evidence type="ECO:0000250" key="1"/>
<evidence type="ECO:0000250" key="2">
    <source>
        <dbReference type="UniProtKB" id="O95721"/>
    </source>
</evidence>
<evidence type="ECO:0000255" key="3">
    <source>
        <dbReference type="PROSITE-ProRule" id="PRU00202"/>
    </source>
</evidence>
<evidence type="ECO:0000256" key="4">
    <source>
        <dbReference type="SAM" id="MobiDB-lite"/>
    </source>
</evidence>
<evidence type="ECO:0000269" key="5">
    <source>
    </source>
</evidence>
<evidence type="ECO:0000305" key="6"/>
<evidence type="ECO:0000312" key="7">
    <source>
        <dbReference type="WormBase" id="K02D10.5"/>
    </source>
</evidence>
<name>SNA29_CAEEL</name>
<comment type="function">
    <text evidence="2 5">SNAREs, soluble N-ethylmaleimide-sensitive factor-attachment protein receptors, are essential proteins for fusion of cellular membranes. SNAREs localized on opposing membranes assemble to form a trans-SNARE complex, an extended, parallel four alpha-helical bundle that drives membrane fusion. Plays a role in the processing and secretion of the aspartic protease hrg-7 from the intestine (PubMed:28581477).</text>
</comment>
<comment type="subcellular location">
    <subcellularLocation>
        <location evidence="1">Synapse</location>
        <location evidence="1">Synaptosome</location>
    </subcellularLocation>
</comment>
<comment type="disruption phenotype">
    <text evidence="5">RNAi-mediated knockdown results in the aberrant secretion and processing of the aspartic protease hrg-7 with accumulation of hrg-7 in its immature uncleaved form and in the intestine.</text>
</comment>
<comment type="similarity">
    <text evidence="6">Belongs to the SNAP-25 family.</text>
</comment>
<feature type="chain" id="PRO_0000213615" description="Soluble NSF attachment protein 29">
    <location>
        <begin position="1"/>
        <end position="277"/>
    </location>
</feature>
<feature type="domain" description="t-SNARE coiled-coil homology 1" evidence="3">
    <location>
        <begin position="44"/>
        <end position="106"/>
    </location>
</feature>
<feature type="domain" description="t-SNARE coiled-coil homology 2" evidence="3">
    <location>
        <begin position="179"/>
        <end position="241"/>
    </location>
</feature>
<feature type="region of interest" description="Disordered" evidence="4">
    <location>
        <begin position="1"/>
        <end position="30"/>
    </location>
</feature>
<feature type="region of interest" description="Disordered" evidence="4">
    <location>
        <begin position="49"/>
        <end position="73"/>
    </location>
</feature>
<feature type="region of interest" description="Disordered" evidence="4">
    <location>
        <begin position="117"/>
        <end position="170"/>
    </location>
</feature>
<feature type="compositionally biased region" description="Basic and acidic residues" evidence="4">
    <location>
        <begin position="1"/>
        <end position="11"/>
    </location>
</feature>
<feature type="compositionally biased region" description="Polar residues" evidence="4">
    <location>
        <begin position="14"/>
        <end position="28"/>
    </location>
</feature>
<feature type="compositionally biased region" description="Basic and acidic residues" evidence="4">
    <location>
        <begin position="49"/>
        <end position="65"/>
    </location>
</feature>
<feature type="compositionally biased region" description="Polar residues" evidence="4">
    <location>
        <begin position="134"/>
        <end position="170"/>
    </location>
</feature>
<gene>
    <name evidence="7" type="primary">snap-29</name>
    <name evidence="7" type="synonym">phi-28</name>
    <name evidence="7" type="ORF">K02D10.5</name>
</gene>
<keyword id="KW-0175">Coiled coil</keyword>
<keyword id="KW-0653">Protein transport</keyword>
<keyword id="KW-1185">Reference proteome</keyword>
<keyword id="KW-0677">Repeat</keyword>
<keyword id="KW-0770">Synapse</keyword>
<keyword id="KW-0771">Synaptosome</keyword>
<keyword id="KW-0813">Transport</keyword>
<accession>P83351</accession>
<sequence length="277" mass="31115">MSRNPFDDDYRPSAASSTMPVKSYTTMGHYSGEDEADYYEREIEKTLQESLDSTERSRRHLENSEKIGTSTAQQLLEQREKLENTEKNLDEIHRTTQMTQRNLNSLKSFFGGMFKNKFTKKPQEPTETPTVPQSKSASRLSETATNLSSGGGSATFSGPSGQRTLTESSRSAIKGTRWEAMDNQIDENLDMMSANLRNLQRLGADLGKEVDSQNEMLDRIQYKAERNDGIVRDQDKQMQKILGTGASTSQTTAESLTPSMDTSTKMSLMMKATSLWK</sequence>
<proteinExistence type="inferred from homology"/>